<keyword id="KW-0687">Ribonucleoprotein</keyword>
<keyword id="KW-0689">Ribosomal protein</keyword>
<keyword id="KW-0694">RNA-binding</keyword>
<keyword id="KW-0699">rRNA-binding</keyword>
<protein>
    <recommendedName>
        <fullName evidence="1">Large ribosomal subunit protein uL18</fullName>
    </recommendedName>
    <alternativeName>
        <fullName evidence="2">50S ribosomal protein L18</fullName>
    </alternativeName>
</protein>
<accession>Q3K604</accession>
<name>RL18_PSEPF</name>
<comment type="function">
    <text evidence="1">This is one of the proteins that bind and probably mediate the attachment of the 5S RNA into the large ribosomal subunit, where it forms part of the central protuberance.</text>
</comment>
<comment type="subunit">
    <text evidence="1">Part of the 50S ribosomal subunit; part of the 5S rRNA/L5/L18/L25 subcomplex. Contacts the 5S and 23S rRNAs.</text>
</comment>
<comment type="similarity">
    <text evidence="1">Belongs to the universal ribosomal protein uL18 family.</text>
</comment>
<organism>
    <name type="scientific">Pseudomonas fluorescens (strain Pf0-1)</name>
    <dbReference type="NCBI Taxonomy" id="205922"/>
    <lineage>
        <taxon>Bacteria</taxon>
        <taxon>Pseudomonadati</taxon>
        <taxon>Pseudomonadota</taxon>
        <taxon>Gammaproteobacteria</taxon>
        <taxon>Pseudomonadales</taxon>
        <taxon>Pseudomonadaceae</taxon>
        <taxon>Pseudomonas</taxon>
    </lineage>
</organism>
<evidence type="ECO:0000255" key="1">
    <source>
        <dbReference type="HAMAP-Rule" id="MF_01337"/>
    </source>
</evidence>
<evidence type="ECO:0000305" key="2"/>
<dbReference type="EMBL" id="CP000094">
    <property type="protein sequence ID" value="ABA76800.1"/>
    <property type="molecule type" value="Genomic_DNA"/>
</dbReference>
<dbReference type="RefSeq" id="WP_003186037.1">
    <property type="nucleotide sequence ID" value="NC_007492.2"/>
</dbReference>
<dbReference type="SMR" id="Q3K604"/>
<dbReference type="GeneID" id="98113691"/>
<dbReference type="KEGG" id="pfo:Pfl01_5063"/>
<dbReference type="eggNOG" id="COG0256">
    <property type="taxonomic scope" value="Bacteria"/>
</dbReference>
<dbReference type="HOGENOM" id="CLU_098841_0_1_6"/>
<dbReference type="Proteomes" id="UP000002704">
    <property type="component" value="Chromosome"/>
</dbReference>
<dbReference type="GO" id="GO:0022625">
    <property type="term" value="C:cytosolic large ribosomal subunit"/>
    <property type="evidence" value="ECO:0007669"/>
    <property type="project" value="TreeGrafter"/>
</dbReference>
<dbReference type="GO" id="GO:0008097">
    <property type="term" value="F:5S rRNA binding"/>
    <property type="evidence" value="ECO:0007669"/>
    <property type="project" value="TreeGrafter"/>
</dbReference>
<dbReference type="GO" id="GO:0003735">
    <property type="term" value="F:structural constituent of ribosome"/>
    <property type="evidence" value="ECO:0007669"/>
    <property type="project" value="InterPro"/>
</dbReference>
<dbReference type="GO" id="GO:0006412">
    <property type="term" value="P:translation"/>
    <property type="evidence" value="ECO:0007669"/>
    <property type="project" value="UniProtKB-UniRule"/>
</dbReference>
<dbReference type="CDD" id="cd00432">
    <property type="entry name" value="Ribosomal_L18_L5e"/>
    <property type="match status" value="1"/>
</dbReference>
<dbReference type="FunFam" id="3.30.420.100:FF:000001">
    <property type="entry name" value="50S ribosomal protein L18"/>
    <property type="match status" value="1"/>
</dbReference>
<dbReference type="Gene3D" id="3.30.420.100">
    <property type="match status" value="1"/>
</dbReference>
<dbReference type="HAMAP" id="MF_01337_B">
    <property type="entry name" value="Ribosomal_uL18_B"/>
    <property type="match status" value="1"/>
</dbReference>
<dbReference type="InterPro" id="IPR004389">
    <property type="entry name" value="Ribosomal_uL18_bac-type"/>
</dbReference>
<dbReference type="InterPro" id="IPR005484">
    <property type="entry name" value="Ribosomal_uL18_bac/euk"/>
</dbReference>
<dbReference type="NCBIfam" id="TIGR00060">
    <property type="entry name" value="L18_bact"/>
    <property type="match status" value="1"/>
</dbReference>
<dbReference type="PANTHER" id="PTHR12899">
    <property type="entry name" value="39S RIBOSOMAL PROTEIN L18, MITOCHONDRIAL"/>
    <property type="match status" value="1"/>
</dbReference>
<dbReference type="PANTHER" id="PTHR12899:SF3">
    <property type="entry name" value="LARGE RIBOSOMAL SUBUNIT PROTEIN UL18M"/>
    <property type="match status" value="1"/>
</dbReference>
<dbReference type="Pfam" id="PF00861">
    <property type="entry name" value="Ribosomal_L18p"/>
    <property type="match status" value="1"/>
</dbReference>
<dbReference type="SUPFAM" id="SSF53137">
    <property type="entry name" value="Translational machinery components"/>
    <property type="match status" value="1"/>
</dbReference>
<proteinExistence type="inferred from homology"/>
<feature type="chain" id="PRO_0000251346" description="Large ribosomal subunit protein uL18">
    <location>
        <begin position="1"/>
        <end position="116"/>
    </location>
</feature>
<gene>
    <name evidence="1" type="primary">rplR</name>
    <name type="ordered locus">Pfl01_5063</name>
</gene>
<reference key="1">
    <citation type="journal article" date="2009" name="Genome Biol.">
        <title>Genomic and genetic analyses of diversity and plant interactions of Pseudomonas fluorescens.</title>
        <authorList>
            <person name="Silby M.W."/>
            <person name="Cerdeno-Tarraga A.M."/>
            <person name="Vernikos G.S."/>
            <person name="Giddens S.R."/>
            <person name="Jackson R.W."/>
            <person name="Preston G.M."/>
            <person name="Zhang X.-X."/>
            <person name="Moon C.D."/>
            <person name="Gehrig S.M."/>
            <person name="Godfrey S.A.C."/>
            <person name="Knight C.G."/>
            <person name="Malone J.G."/>
            <person name="Robinson Z."/>
            <person name="Spiers A.J."/>
            <person name="Harris S."/>
            <person name="Challis G.L."/>
            <person name="Yaxley A.M."/>
            <person name="Harris D."/>
            <person name="Seeger K."/>
            <person name="Murphy L."/>
            <person name="Rutter S."/>
            <person name="Squares R."/>
            <person name="Quail M.A."/>
            <person name="Saunders E."/>
            <person name="Mavromatis K."/>
            <person name="Brettin T.S."/>
            <person name="Bentley S.D."/>
            <person name="Hothersall J."/>
            <person name="Stephens E."/>
            <person name="Thomas C.M."/>
            <person name="Parkhill J."/>
            <person name="Levy S.B."/>
            <person name="Rainey P.B."/>
            <person name="Thomson N.R."/>
        </authorList>
    </citation>
    <scope>NUCLEOTIDE SEQUENCE [LARGE SCALE GENOMIC DNA]</scope>
    <source>
        <strain>Pf0-1</strain>
    </source>
</reference>
<sequence length="116" mass="12643">MTDKKVTRLRRARKARLKMHELEVVRLCVFRSSQHIYAQVISADGNKVLASASTLDKELRDGATGNIDAATKVGQLVATRAKAAGVSQVAFDRSGFKYHGRVKALADAAREAGLEF</sequence>